<accession>Q7V002</accession>
<comment type="function">
    <text evidence="1">Required for maturation of 30S ribosomal subunits.</text>
</comment>
<comment type="subcellular location">
    <subcellularLocation>
        <location evidence="1">Cytoplasm</location>
    </subcellularLocation>
</comment>
<comment type="similarity">
    <text evidence="1">Belongs to the RimP family.</text>
</comment>
<evidence type="ECO:0000255" key="1">
    <source>
        <dbReference type="HAMAP-Rule" id="MF_01077"/>
    </source>
</evidence>
<protein>
    <recommendedName>
        <fullName evidence="1">Ribosome maturation factor RimP</fullName>
    </recommendedName>
</protein>
<dbReference type="EMBL" id="BX548174">
    <property type="protein sequence ID" value="CAE19950.1"/>
    <property type="molecule type" value="Genomic_DNA"/>
</dbReference>
<dbReference type="RefSeq" id="WP_011133119.1">
    <property type="nucleotide sequence ID" value="NC_005072.1"/>
</dbReference>
<dbReference type="SMR" id="Q7V002"/>
<dbReference type="STRING" id="59919.PMM1491"/>
<dbReference type="KEGG" id="pmm:PMM1491"/>
<dbReference type="eggNOG" id="COG0779">
    <property type="taxonomic scope" value="Bacteria"/>
</dbReference>
<dbReference type="HOGENOM" id="CLU_070525_2_1_3"/>
<dbReference type="OrthoDB" id="9805006at2"/>
<dbReference type="Proteomes" id="UP000001026">
    <property type="component" value="Chromosome"/>
</dbReference>
<dbReference type="GO" id="GO:0005829">
    <property type="term" value="C:cytosol"/>
    <property type="evidence" value="ECO:0007669"/>
    <property type="project" value="TreeGrafter"/>
</dbReference>
<dbReference type="GO" id="GO:0000028">
    <property type="term" value="P:ribosomal small subunit assembly"/>
    <property type="evidence" value="ECO:0007669"/>
    <property type="project" value="TreeGrafter"/>
</dbReference>
<dbReference type="GO" id="GO:0006412">
    <property type="term" value="P:translation"/>
    <property type="evidence" value="ECO:0007669"/>
    <property type="project" value="TreeGrafter"/>
</dbReference>
<dbReference type="Gene3D" id="3.30.300.70">
    <property type="entry name" value="RimP-like superfamily, N-terminal"/>
    <property type="match status" value="1"/>
</dbReference>
<dbReference type="HAMAP" id="MF_01077">
    <property type="entry name" value="RimP"/>
    <property type="match status" value="1"/>
</dbReference>
<dbReference type="InterPro" id="IPR003728">
    <property type="entry name" value="Ribosome_maturation_RimP"/>
</dbReference>
<dbReference type="InterPro" id="IPR036847">
    <property type="entry name" value="RimP_C_sf"/>
</dbReference>
<dbReference type="InterPro" id="IPR028989">
    <property type="entry name" value="RimP_N"/>
</dbReference>
<dbReference type="InterPro" id="IPR035956">
    <property type="entry name" value="RimP_N_sf"/>
</dbReference>
<dbReference type="NCBIfam" id="NF011240">
    <property type="entry name" value="PRK14646.1"/>
    <property type="match status" value="1"/>
</dbReference>
<dbReference type="PANTHER" id="PTHR33867">
    <property type="entry name" value="RIBOSOME MATURATION FACTOR RIMP"/>
    <property type="match status" value="1"/>
</dbReference>
<dbReference type="PANTHER" id="PTHR33867:SF1">
    <property type="entry name" value="RIBOSOME MATURATION FACTOR RIMP"/>
    <property type="match status" value="1"/>
</dbReference>
<dbReference type="Pfam" id="PF02576">
    <property type="entry name" value="RimP_N"/>
    <property type="match status" value="1"/>
</dbReference>
<dbReference type="SUPFAM" id="SSF74942">
    <property type="entry name" value="YhbC-like, C-terminal domain"/>
    <property type="match status" value="1"/>
</dbReference>
<dbReference type="SUPFAM" id="SSF75420">
    <property type="entry name" value="YhbC-like, N-terminal domain"/>
    <property type="match status" value="1"/>
</dbReference>
<sequence length="155" mass="17577">MDKECKSNLESLLQGVAKEFNLKIHSLDILTNQNPIIVKIIICKTNKDDITLDDCSRFNNPAISVIENSNLLNCSYVLEISSQGVSDELTSERDFKTFKGFPVNVELNQKNSQIKFLNGLLYEKSKDYLAINIKGKIKKIPFNEVLKVSLCTFKD</sequence>
<gene>
    <name evidence="1" type="primary">rimP</name>
    <name type="ordered locus">PMM1491</name>
</gene>
<keyword id="KW-0963">Cytoplasm</keyword>
<keyword id="KW-0690">Ribosome biogenesis</keyword>
<feature type="chain" id="PRO_0000181904" description="Ribosome maturation factor RimP">
    <location>
        <begin position="1"/>
        <end position="155"/>
    </location>
</feature>
<reference key="1">
    <citation type="journal article" date="2003" name="Nature">
        <title>Genome divergence in two Prochlorococcus ecotypes reflects oceanic niche differentiation.</title>
        <authorList>
            <person name="Rocap G."/>
            <person name="Larimer F.W."/>
            <person name="Lamerdin J.E."/>
            <person name="Malfatti S."/>
            <person name="Chain P."/>
            <person name="Ahlgren N.A."/>
            <person name="Arellano A."/>
            <person name="Coleman M."/>
            <person name="Hauser L."/>
            <person name="Hess W.R."/>
            <person name="Johnson Z.I."/>
            <person name="Land M.L."/>
            <person name="Lindell D."/>
            <person name="Post A.F."/>
            <person name="Regala W."/>
            <person name="Shah M."/>
            <person name="Shaw S.L."/>
            <person name="Steglich C."/>
            <person name="Sullivan M.B."/>
            <person name="Ting C.S."/>
            <person name="Tolonen A."/>
            <person name="Webb E.A."/>
            <person name="Zinser E.R."/>
            <person name="Chisholm S.W."/>
        </authorList>
    </citation>
    <scope>NUCLEOTIDE SEQUENCE [LARGE SCALE GENOMIC DNA]</scope>
    <source>
        <strain>CCMP1986 / NIES-2087 / MED4</strain>
    </source>
</reference>
<proteinExistence type="inferred from homology"/>
<name>RIMP_PROMP</name>
<organism>
    <name type="scientific">Prochlorococcus marinus subsp. pastoris (strain CCMP1986 / NIES-2087 / MED4)</name>
    <dbReference type="NCBI Taxonomy" id="59919"/>
    <lineage>
        <taxon>Bacteria</taxon>
        <taxon>Bacillati</taxon>
        <taxon>Cyanobacteriota</taxon>
        <taxon>Cyanophyceae</taxon>
        <taxon>Synechococcales</taxon>
        <taxon>Prochlorococcaceae</taxon>
        <taxon>Prochlorococcus</taxon>
    </lineage>
</organism>